<accession>B0JR45</accession>
<sequence length="326" mass="36329">MAFTWIRHHILGLEDWQPEEYQTLLQTASSFREVLSRRTKKVPALQGQVVTNLFFEPSTRTRSSFELAAKRLSADVLNFAPGSSSLTKGETILDTALTYVAMGTDIFVIRHQQSGVPDLIAGEMDRLESGVSILNAGDGQHEHPSQGLLDLFTICCLLDEENPRLELLEGKKIAIVGDILHSRVARSNIWSLTTAGAEVHLSAPPTLLPKYFGELCDRLFLHWDLEPALEKADFVMTLRLQKERMTANLLPSLREYHQSFGITRPRLQSCQPGVKVLHPGPVNRGVEISSDLMDDPDFSLISQQVTSGVAVRMALLYLIGNLRSDQ</sequence>
<gene>
    <name evidence="1" type="primary">pyrB</name>
    <name type="ordered locus">MAE_40920</name>
</gene>
<feature type="chain" id="PRO_0000334590" description="Aspartate carbamoyltransferase catalytic subunit">
    <location>
        <begin position="1"/>
        <end position="326"/>
    </location>
</feature>
<feature type="binding site" evidence="1">
    <location>
        <position position="60"/>
    </location>
    <ligand>
        <name>carbamoyl phosphate</name>
        <dbReference type="ChEBI" id="CHEBI:58228"/>
    </ligand>
</feature>
<feature type="binding site" evidence="1">
    <location>
        <position position="61"/>
    </location>
    <ligand>
        <name>carbamoyl phosphate</name>
        <dbReference type="ChEBI" id="CHEBI:58228"/>
    </ligand>
</feature>
<feature type="binding site" evidence="1">
    <location>
        <position position="88"/>
    </location>
    <ligand>
        <name>L-aspartate</name>
        <dbReference type="ChEBI" id="CHEBI:29991"/>
    </ligand>
</feature>
<feature type="binding site" evidence="1">
    <location>
        <position position="110"/>
    </location>
    <ligand>
        <name>carbamoyl phosphate</name>
        <dbReference type="ChEBI" id="CHEBI:58228"/>
    </ligand>
</feature>
<feature type="binding site" evidence="1">
    <location>
        <position position="143"/>
    </location>
    <ligand>
        <name>carbamoyl phosphate</name>
        <dbReference type="ChEBI" id="CHEBI:58228"/>
    </ligand>
</feature>
<feature type="binding site" evidence="1">
    <location>
        <position position="146"/>
    </location>
    <ligand>
        <name>carbamoyl phosphate</name>
        <dbReference type="ChEBI" id="CHEBI:58228"/>
    </ligand>
</feature>
<feature type="binding site" evidence="1">
    <location>
        <position position="183"/>
    </location>
    <ligand>
        <name>L-aspartate</name>
        <dbReference type="ChEBI" id="CHEBI:29991"/>
    </ligand>
</feature>
<feature type="binding site" evidence="1">
    <location>
        <position position="239"/>
    </location>
    <ligand>
        <name>L-aspartate</name>
        <dbReference type="ChEBI" id="CHEBI:29991"/>
    </ligand>
</feature>
<feature type="binding site" evidence="1">
    <location>
        <position position="280"/>
    </location>
    <ligand>
        <name>carbamoyl phosphate</name>
        <dbReference type="ChEBI" id="CHEBI:58228"/>
    </ligand>
</feature>
<feature type="binding site" evidence="1">
    <location>
        <position position="281"/>
    </location>
    <ligand>
        <name>carbamoyl phosphate</name>
        <dbReference type="ChEBI" id="CHEBI:58228"/>
    </ligand>
</feature>
<reference key="1">
    <citation type="journal article" date="2007" name="DNA Res.">
        <title>Complete genomic structure of the bloom-forming toxic cyanobacterium Microcystis aeruginosa NIES-843.</title>
        <authorList>
            <person name="Kaneko T."/>
            <person name="Nakajima N."/>
            <person name="Okamoto S."/>
            <person name="Suzuki I."/>
            <person name="Tanabe Y."/>
            <person name="Tamaoki M."/>
            <person name="Nakamura Y."/>
            <person name="Kasai F."/>
            <person name="Watanabe A."/>
            <person name="Kawashima K."/>
            <person name="Kishida Y."/>
            <person name="Ono A."/>
            <person name="Shimizu Y."/>
            <person name="Takahashi C."/>
            <person name="Minami C."/>
            <person name="Fujishiro T."/>
            <person name="Kohara M."/>
            <person name="Katoh M."/>
            <person name="Nakazaki N."/>
            <person name="Nakayama S."/>
            <person name="Yamada M."/>
            <person name="Tabata S."/>
            <person name="Watanabe M.M."/>
        </authorList>
    </citation>
    <scope>NUCLEOTIDE SEQUENCE [LARGE SCALE GENOMIC DNA]</scope>
    <source>
        <strain>NIES-843 / IAM M-247</strain>
    </source>
</reference>
<proteinExistence type="inferred from homology"/>
<keyword id="KW-0665">Pyrimidine biosynthesis</keyword>
<keyword id="KW-0808">Transferase</keyword>
<organism>
    <name type="scientific">Microcystis aeruginosa (strain NIES-843 / IAM M-2473)</name>
    <dbReference type="NCBI Taxonomy" id="449447"/>
    <lineage>
        <taxon>Bacteria</taxon>
        <taxon>Bacillati</taxon>
        <taxon>Cyanobacteriota</taxon>
        <taxon>Cyanophyceae</taxon>
        <taxon>Oscillatoriophycideae</taxon>
        <taxon>Chroococcales</taxon>
        <taxon>Microcystaceae</taxon>
        <taxon>Microcystis</taxon>
    </lineage>
</organism>
<comment type="function">
    <text evidence="1">Catalyzes the condensation of carbamoyl phosphate and aspartate to form carbamoyl aspartate and inorganic phosphate, the committed step in the de novo pyrimidine nucleotide biosynthesis pathway.</text>
</comment>
<comment type="catalytic activity">
    <reaction evidence="1">
        <text>carbamoyl phosphate + L-aspartate = N-carbamoyl-L-aspartate + phosphate + H(+)</text>
        <dbReference type="Rhea" id="RHEA:20013"/>
        <dbReference type="ChEBI" id="CHEBI:15378"/>
        <dbReference type="ChEBI" id="CHEBI:29991"/>
        <dbReference type="ChEBI" id="CHEBI:32814"/>
        <dbReference type="ChEBI" id="CHEBI:43474"/>
        <dbReference type="ChEBI" id="CHEBI:58228"/>
        <dbReference type="EC" id="2.1.3.2"/>
    </reaction>
</comment>
<comment type="pathway">
    <text evidence="1">Pyrimidine metabolism; UMP biosynthesis via de novo pathway; (S)-dihydroorotate from bicarbonate: step 2/3.</text>
</comment>
<comment type="subunit">
    <text evidence="1">Heterododecamer (2C3:3R2) of six catalytic PyrB chains organized as two trimers (C3), and six regulatory PyrI chains organized as three dimers (R2).</text>
</comment>
<comment type="similarity">
    <text evidence="1">Belongs to the aspartate/ornithine carbamoyltransferase superfamily. ATCase family.</text>
</comment>
<name>PYRB_MICAN</name>
<protein>
    <recommendedName>
        <fullName evidence="1">Aspartate carbamoyltransferase catalytic subunit</fullName>
        <ecNumber evidence="1">2.1.3.2</ecNumber>
    </recommendedName>
    <alternativeName>
        <fullName evidence="1">Aspartate transcarbamylase</fullName>
        <shortName evidence="1">ATCase</shortName>
    </alternativeName>
</protein>
<evidence type="ECO:0000255" key="1">
    <source>
        <dbReference type="HAMAP-Rule" id="MF_00001"/>
    </source>
</evidence>
<dbReference type="EC" id="2.1.3.2" evidence="1"/>
<dbReference type="EMBL" id="AP009552">
    <property type="protein sequence ID" value="BAG03914.1"/>
    <property type="molecule type" value="Genomic_DNA"/>
</dbReference>
<dbReference type="RefSeq" id="WP_002795782.1">
    <property type="nucleotide sequence ID" value="NC_010296.1"/>
</dbReference>
<dbReference type="SMR" id="B0JR45"/>
<dbReference type="STRING" id="449447.MAE_40920"/>
<dbReference type="PaxDb" id="449447-MAE_40920"/>
<dbReference type="EnsemblBacteria" id="BAG03914">
    <property type="protein sequence ID" value="BAG03914"/>
    <property type="gene ID" value="MAE_40920"/>
</dbReference>
<dbReference type="KEGG" id="mar:MAE_40920"/>
<dbReference type="eggNOG" id="COG0540">
    <property type="taxonomic scope" value="Bacteria"/>
</dbReference>
<dbReference type="HOGENOM" id="CLU_043846_2_0_3"/>
<dbReference type="BioCyc" id="MAER449447:MAE_RS17715-MONOMER"/>
<dbReference type="UniPathway" id="UPA00070">
    <property type="reaction ID" value="UER00116"/>
</dbReference>
<dbReference type="Proteomes" id="UP000001510">
    <property type="component" value="Chromosome"/>
</dbReference>
<dbReference type="GO" id="GO:0005829">
    <property type="term" value="C:cytosol"/>
    <property type="evidence" value="ECO:0007669"/>
    <property type="project" value="TreeGrafter"/>
</dbReference>
<dbReference type="GO" id="GO:0016597">
    <property type="term" value="F:amino acid binding"/>
    <property type="evidence" value="ECO:0007669"/>
    <property type="project" value="InterPro"/>
</dbReference>
<dbReference type="GO" id="GO:0004070">
    <property type="term" value="F:aspartate carbamoyltransferase activity"/>
    <property type="evidence" value="ECO:0007669"/>
    <property type="project" value="UniProtKB-UniRule"/>
</dbReference>
<dbReference type="GO" id="GO:0006207">
    <property type="term" value="P:'de novo' pyrimidine nucleobase biosynthetic process"/>
    <property type="evidence" value="ECO:0007669"/>
    <property type="project" value="InterPro"/>
</dbReference>
<dbReference type="GO" id="GO:0044205">
    <property type="term" value="P:'de novo' UMP biosynthetic process"/>
    <property type="evidence" value="ECO:0007669"/>
    <property type="project" value="UniProtKB-UniRule"/>
</dbReference>
<dbReference type="GO" id="GO:0006520">
    <property type="term" value="P:amino acid metabolic process"/>
    <property type="evidence" value="ECO:0007669"/>
    <property type="project" value="InterPro"/>
</dbReference>
<dbReference type="Gene3D" id="3.40.50.1370">
    <property type="entry name" value="Aspartate/ornithine carbamoyltransferase"/>
    <property type="match status" value="2"/>
</dbReference>
<dbReference type="HAMAP" id="MF_00001">
    <property type="entry name" value="Asp_carb_tr"/>
    <property type="match status" value="1"/>
</dbReference>
<dbReference type="InterPro" id="IPR006132">
    <property type="entry name" value="Asp/Orn_carbamoyltranf_P-bd"/>
</dbReference>
<dbReference type="InterPro" id="IPR006130">
    <property type="entry name" value="Asp/Orn_carbamoylTrfase"/>
</dbReference>
<dbReference type="InterPro" id="IPR036901">
    <property type="entry name" value="Asp/Orn_carbamoylTrfase_sf"/>
</dbReference>
<dbReference type="InterPro" id="IPR002082">
    <property type="entry name" value="Asp_carbamoyltransf"/>
</dbReference>
<dbReference type="InterPro" id="IPR006131">
    <property type="entry name" value="Asp_carbamoyltransf_Asp/Orn-bd"/>
</dbReference>
<dbReference type="NCBIfam" id="TIGR00670">
    <property type="entry name" value="asp_carb_tr"/>
    <property type="match status" value="1"/>
</dbReference>
<dbReference type="NCBIfam" id="NF002032">
    <property type="entry name" value="PRK00856.1"/>
    <property type="match status" value="1"/>
</dbReference>
<dbReference type="PANTHER" id="PTHR45753:SF6">
    <property type="entry name" value="ASPARTATE CARBAMOYLTRANSFERASE"/>
    <property type="match status" value="1"/>
</dbReference>
<dbReference type="PANTHER" id="PTHR45753">
    <property type="entry name" value="ORNITHINE CARBAMOYLTRANSFERASE, MITOCHONDRIAL"/>
    <property type="match status" value="1"/>
</dbReference>
<dbReference type="Pfam" id="PF00185">
    <property type="entry name" value="OTCace"/>
    <property type="match status" value="1"/>
</dbReference>
<dbReference type="Pfam" id="PF02729">
    <property type="entry name" value="OTCace_N"/>
    <property type="match status" value="1"/>
</dbReference>
<dbReference type="PRINTS" id="PR00100">
    <property type="entry name" value="AOTCASE"/>
</dbReference>
<dbReference type="PRINTS" id="PR00101">
    <property type="entry name" value="ATCASE"/>
</dbReference>
<dbReference type="SUPFAM" id="SSF53671">
    <property type="entry name" value="Aspartate/ornithine carbamoyltransferase"/>
    <property type="match status" value="1"/>
</dbReference>
<dbReference type="PROSITE" id="PS00097">
    <property type="entry name" value="CARBAMOYLTRANSFERASE"/>
    <property type="match status" value="1"/>
</dbReference>